<comment type="catalytic activity">
    <reaction>
        <text>NH4(+) + 3 NAD(+) + 2 H2O = nitrite + 3 NADH + 5 H(+)</text>
        <dbReference type="Rhea" id="RHEA:24628"/>
        <dbReference type="ChEBI" id="CHEBI:15377"/>
        <dbReference type="ChEBI" id="CHEBI:15378"/>
        <dbReference type="ChEBI" id="CHEBI:16301"/>
        <dbReference type="ChEBI" id="CHEBI:28938"/>
        <dbReference type="ChEBI" id="CHEBI:57540"/>
        <dbReference type="ChEBI" id="CHEBI:57945"/>
        <dbReference type="EC" id="1.7.1.15"/>
    </reaction>
</comment>
<comment type="cofactor">
    <cofactor>
        <name>siroheme</name>
        <dbReference type="ChEBI" id="CHEBI:60052"/>
    </cofactor>
    <text>Binds 1 siroheme per subunit.</text>
</comment>
<comment type="cofactor">
    <cofactor evidence="2">
        <name>[2Fe-2S] cluster</name>
        <dbReference type="ChEBI" id="CHEBI:190135"/>
    </cofactor>
    <text evidence="2">Binds 1 [2Fe-2S] cluster per subunit.</text>
</comment>
<comment type="cofactor">
    <cofactor>
        <name>[4Fe-4S] cluster</name>
        <dbReference type="ChEBI" id="CHEBI:49883"/>
    </cofactor>
    <text>Binds 1 [4Fe-4S] cluster per subunit.</text>
</comment>
<comment type="cofactor">
    <cofactor>
        <name>FAD</name>
        <dbReference type="ChEBI" id="CHEBI:57692"/>
    </cofactor>
</comment>
<comment type="pathway">
    <text>Nitrogen metabolism; nitrate reduction (assimilation).</text>
</comment>
<comment type="subunit">
    <text>Homodimer which associates with NirD.</text>
</comment>
<comment type="similarity">
    <text evidence="4">Belongs to the nitrite and sulfite reductase 4Fe-4S domain family.</text>
</comment>
<organism>
    <name type="scientific">Escherichia coli (strain K12)</name>
    <dbReference type="NCBI Taxonomy" id="83333"/>
    <lineage>
        <taxon>Bacteria</taxon>
        <taxon>Pseudomonadati</taxon>
        <taxon>Pseudomonadota</taxon>
        <taxon>Gammaproteobacteria</taxon>
        <taxon>Enterobacterales</taxon>
        <taxon>Enterobacteriaceae</taxon>
        <taxon>Escherichia</taxon>
    </lineage>
</organism>
<gene>
    <name type="primary">nirB</name>
    <name type="ordered locus">b3365</name>
    <name type="ordered locus">JW3328</name>
</gene>
<feature type="chain" id="PRO_0000199962" description="Nitrite reductase (NADH) large subunit">
    <location>
        <begin position="1"/>
        <end position="847"/>
    </location>
</feature>
<feature type="binding site" evidence="3">
    <location>
        <begin position="44"/>
        <end position="79"/>
    </location>
    <ligand>
        <name>FAD</name>
        <dbReference type="ChEBI" id="CHEBI:57692"/>
    </ligand>
</feature>
<feature type="binding site" evidence="3">
    <location>
        <begin position="193"/>
        <end position="225"/>
    </location>
    <ligand>
        <name>NAD(+)</name>
        <dbReference type="ChEBI" id="CHEBI:57540"/>
    </ligand>
</feature>
<feature type="binding site" evidence="2">
    <location>
        <position position="425"/>
    </location>
    <ligand>
        <name>[2Fe-2S] cluster</name>
        <dbReference type="ChEBI" id="CHEBI:190135"/>
    </ligand>
</feature>
<feature type="binding site" evidence="2">
    <location>
        <position position="427"/>
    </location>
    <ligand>
        <name>[2Fe-2S] cluster</name>
        <dbReference type="ChEBI" id="CHEBI:190135"/>
    </ligand>
</feature>
<feature type="binding site" evidence="2">
    <location>
        <position position="459"/>
    </location>
    <ligand>
        <name>[2Fe-2S] cluster</name>
        <dbReference type="ChEBI" id="CHEBI:190135"/>
    </ligand>
</feature>
<feature type="binding site" evidence="2">
    <location>
        <position position="462"/>
    </location>
    <ligand>
        <name>[2Fe-2S] cluster</name>
        <dbReference type="ChEBI" id="CHEBI:190135"/>
    </ligand>
</feature>
<feature type="binding site" evidence="1">
    <location>
        <position position="641"/>
    </location>
    <ligand>
        <name>[4Fe-4S] cluster</name>
        <dbReference type="ChEBI" id="CHEBI:49883"/>
    </ligand>
</feature>
<feature type="binding site" evidence="1">
    <location>
        <position position="647"/>
    </location>
    <ligand>
        <name>[4Fe-4S] cluster</name>
        <dbReference type="ChEBI" id="CHEBI:49883"/>
    </ligand>
</feature>
<feature type="binding site" evidence="1">
    <location>
        <position position="681"/>
    </location>
    <ligand>
        <name>[4Fe-4S] cluster</name>
        <dbReference type="ChEBI" id="CHEBI:49883"/>
    </ligand>
</feature>
<feature type="binding site" evidence="1">
    <location>
        <position position="685"/>
    </location>
    <ligand>
        <name>[4Fe-4S] cluster</name>
        <dbReference type="ChEBI" id="CHEBI:49883"/>
    </ligand>
</feature>
<feature type="binding site" description="axial binding residue" evidence="1">
    <location>
        <position position="685"/>
    </location>
    <ligand>
        <name>siroheme</name>
        <dbReference type="ChEBI" id="CHEBI:60052"/>
    </ligand>
    <ligandPart>
        <name>Fe</name>
        <dbReference type="ChEBI" id="CHEBI:18248"/>
    </ligandPart>
</feature>
<feature type="sequence conflict" description="In Ref. 1 and 2; CAA32416." evidence="4" ref="1 2">
    <original>G</original>
    <variation>A</variation>
    <location>
        <position position="442"/>
    </location>
</feature>
<feature type="sequence conflict" description="In Ref. 1 and 2; CAA32416." evidence="4" ref="1 2">
    <original>YERIPVTLVEDNA</original>
    <variation>MNVSQ</variation>
    <location>
        <begin position="835"/>
        <end position="847"/>
    </location>
</feature>
<protein>
    <recommendedName>
        <fullName>Nitrite reductase (NADH) large subunit</fullName>
        <ecNumber>1.7.1.15</ecNumber>
    </recommendedName>
</protein>
<evidence type="ECO:0000250" key="1"/>
<evidence type="ECO:0000250" key="2">
    <source>
        <dbReference type="UniProtKB" id="P05340"/>
    </source>
</evidence>
<evidence type="ECO:0000255" key="3"/>
<evidence type="ECO:0000305" key="4"/>
<reference key="1">
    <citation type="journal article" date="1989" name="Nucleic Acids Res.">
        <title>Cloning of binding sequences for the Escherichia coli transcription activators, FNR and CRP: location of bases involved in discrimination between FNR and CRP.</title>
        <authorList>
            <person name="Bell A.I."/>
            <person name="Gaston K.L."/>
            <person name="Cole J.A."/>
            <person name="Busby S.J.W."/>
        </authorList>
    </citation>
    <scope>NUCLEOTIDE SEQUENCE [GENOMIC DNA]</scope>
    <source>
        <strain>K12</strain>
    </source>
</reference>
<reference key="2">
    <citation type="journal article" date="1990" name="Eur. J. Biochem.">
        <title>Nucleotide sequence, organisation and structural analysis of the products of genes in the nirB-cysG region of the Escherichia coli K-12 chromosome.</title>
        <authorList>
            <person name="Peakman T."/>
            <person name="Crouzet J."/>
            <person name="Mayaux J.F."/>
            <person name="Busby S.J.W."/>
            <person name="Mohan S."/>
            <person name="Harborne N."/>
            <person name="Wootton J."/>
            <person name="Nicolson R."/>
            <person name="Cole J.A."/>
        </authorList>
    </citation>
    <scope>NUCLEOTIDE SEQUENCE [GENOMIC DNA]</scope>
    <source>
        <strain>K12</strain>
    </source>
</reference>
<reference key="3">
    <citation type="journal article" date="1997" name="Science">
        <title>The complete genome sequence of Escherichia coli K-12.</title>
        <authorList>
            <person name="Blattner F.R."/>
            <person name="Plunkett G. III"/>
            <person name="Bloch C.A."/>
            <person name="Perna N.T."/>
            <person name="Burland V."/>
            <person name="Riley M."/>
            <person name="Collado-Vides J."/>
            <person name="Glasner J.D."/>
            <person name="Rode C.K."/>
            <person name="Mayhew G.F."/>
            <person name="Gregor J."/>
            <person name="Davis N.W."/>
            <person name="Kirkpatrick H.A."/>
            <person name="Goeden M.A."/>
            <person name="Rose D.J."/>
            <person name="Mau B."/>
            <person name="Shao Y."/>
        </authorList>
    </citation>
    <scope>NUCLEOTIDE SEQUENCE [LARGE SCALE GENOMIC DNA]</scope>
    <source>
        <strain>K12 / MG1655 / ATCC 47076</strain>
    </source>
</reference>
<reference key="4">
    <citation type="journal article" date="2006" name="Mol. Syst. Biol.">
        <title>Highly accurate genome sequences of Escherichia coli K-12 strains MG1655 and W3110.</title>
        <authorList>
            <person name="Hayashi K."/>
            <person name="Morooka N."/>
            <person name="Yamamoto Y."/>
            <person name="Fujita K."/>
            <person name="Isono K."/>
            <person name="Choi S."/>
            <person name="Ohtsubo E."/>
            <person name="Baba T."/>
            <person name="Wanner B.L."/>
            <person name="Mori H."/>
            <person name="Horiuchi T."/>
        </authorList>
    </citation>
    <scope>NUCLEOTIDE SEQUENCE [LARGE SCALE GENOMIC DNA]</scope>
    <source>
        <strain>K12 / W3110 / ATCC 27325 / DSM 5911</strain>
    </source>
</reference>
<reference key="5">
    <citation type="journal article" date="1987" name="J. Mol. Biol.">
        <title>Location and sequence of the promoter of the gene for the NADH-dependent nitrite reductase of Escherichia coli and its regulation by oxygen, the Fnr protein and nitrite.</title>
        <authorList>
            <person name="Jayaraman P.S."/>
            <person name="Peakman T.C."/>
            <person name="Busby S.J.W."/>
            <person name="Quincey R.V."/>
            <person name="Cole J.A."/>
        </authorList>
    </citation>
    <scope>NUCLEOTIDE SEQUENCE [GENOMIC DNA] OF 1-21</scope>
</reference>
<dbReference type="EC" id="1.7.1.15"/>
<dbReference type="EMBL" id="X14202">
    <property type="protein sequence ID" value="CAA32416.1"/>
    <property type="molecule type" value="Genomic_DNA"/>
</dbReference>
<dbReference type="EMBL" id="U18997">
    <property type="protein sequence ID" value="AAA58162.1"/>
    <property type="molecule type" value="Genomic_DNA"/>
</dbReference>
<dbReference type="EMBL" id="U00096">
    <property type="protein sequence ID" value="AAC76390.1"/>
    <property type="molecule type" value="Genomic_DNA"/>
</dbReference>
<dbReference type="EMBL" id="AP009048">
    <property type="protein sequence ID" value="BAE77925.1"/>
    <property type="molecule type" value="Genomic_DNA"/>
</dbReference>
<dbReference type="PIR" id="H65130">
    <property type="entry name" value="H65130"/>
</dbReference>
<dbReference type="RefSeq" id="NP_417824.1">
    <property type="nucleotide sequence ID" value="NC_000913.3"/>
</dbReference>
<dbReference type="RefSeq" id="WP_000049208.1">
    <property type="nucleotide sequence ID" value="NZ_SSZK01000008.1"/>
</dbReference>
<dbReference type="SMR" id="P08201"/>
<dbReference type="BioGRID" id="4261087">
    <property type="interactions" value="22"/>
</dbReference>
<dbReference type="BioGRID" id="852179">
    <property type="interactions" value="1"/>
</dbReference>
<dbReference type="FunCoup" id="P08201">
    <property type="interactions" value="172"/>
</dbReference>
<dbReference type="IntAct" id="P08201">
    <property type="interactions" value="1"/>
</dbReference>
<dbReference type="STRING" id="511145.b3365"/>
<dbReference type="jPOST" id="P08201"/>
<dbReference type="PaxDb" id="511145-b3365"/>
<dbReference type="EnsemblBacteria" id="AAC76390">
    <property type="protein sequence ID" value="AAC76390"/>
    <property type="gene ID" value="b3365"/>
</dbReference>
<dbReference type="GeneID" id="947868"/>
<dbReference type="KEGG" id="ecj:JW3328"/>
<dbReference type="KEGG" id="eco:b3365"/>
<dbReference type="KEGG" id="ecoc:C3026_18275"/>
<dbReference type="PATRIC" id="fig|1411691.4.peg.3364"/>
<dbReference type="EchoBASE" id="EB0647"/>
<dbReference type="eggNOG" id="COG1251">
    <property type="taxonomic scope" value="Bacteria"/>
</dbReference>
<dbReference type="HOGENOM" id="CLU_003291_0_0_6"/>
<dbReference type="InParanoid" id="P08201"/>
<dbReference type="OMA" id="MWGGVTN"/>
<dbReference type="OrthoDB" id="9768666at2"/>
<dbReference type="PhylomeDB" id="P08201"/>
<dbReference type="BioCyc" id="EcoCyc:NIRB-MONOMER"/>
<dbReference type="BioCyc" id="MetaCyc:NIRB-MONOMER"/>
<dbReference type="UniPathway" id="UPA00653"/>
<dbReference type="PRO" id="PR:P08201"/>
<dbReference type="Proteomes" id="UP000000625">
    <property type="component" value="Chromosome"/>
</dbReference>
<dbReference type="GO" id="GO:0009344">
    <property type="term" value="C:nitrite reductase complex [NAD(P)H]"/>
    <property type="evidence" value="ECO:0000314"/>
    <property type="project" value="EcoCyc"/>
</dbReference>
<dbReference type="GO" id="GO:0051537">
    <property type="term" value="F:2 iron, 2 sulfur cluster binding"/>
    <property type="evidence" value="ECO:0000314"/>
    <property type="project" value="EcoCyc"/>
</dbReference>
<dbReference type="GO" id="GO:0051539">
    <property type="term" value="F:4 iron, 4 sulfur cluster binding"/>
    <property type="evidence" value="ECO:0007669"/>
    <property type="project" value="UniProtKB-KW"/>
</dbReference>
<dbReference type="GO" id="GO:0050660">
    <property type="term" value="F:flavin adenine dinucleotide binding"/>
    <property type="evidence" value="ECO:0000314"/>
    <property type="project" value="EcoCyc"/>
</dbReference>
<dbReference type="GO" id="GO:0020037">
    <property type="term" value="F:heme binding"/>
    <property type="evidence" value="ECO:0000314"/>
    <property type="project" value="EcoCyc"/>
</dbReference>
<dbReference type="GO" id="GO:0046872">
    <property type="term" value="F:metal ion binding"/>
    <property type="evidence" value="ECO:0007669"/>
    <property type="project" value="UniProtKB-KW"/>
</dbReference>
<dbReference type="GO" id="GO:0050661">
    <property type="term" value="F:NADP binding"/>
    <property type="evidence" value="ECO:0007669"/>
    <property type="project" value="InterPro"/>
</dbReference>
<dbReference type="GO" id="GO:0106316">
    <property type="term" value="F:nitrite reductase NADH activity"/>
    <property type="evidence" value="ECO:0000314"/>
    <property type="project" value="EcoCyc"/>
</dbReference>
<dbReference type="GO" id="GO:0006113">
    <property type="term" value="P:fermentation"/>
    <property type="evidence" value="ECO:0000315"/>
    <property type="project" value="EcoCyc"/>
</dbReference>
<dbReference type="GO" id="GO:0042128">
    <property type="term" value="P:nitrate assimilation"/>
    <property type="evidence" value="ECO:0000315"/>
    <property type="project" value="EcoCyc"/>
</dbReference>
<dbReference type="CDD" id="cd19943">
    <property type="entry name" value="NirB_Fer2_BFD-like_1"/>
    <property type="match status" value="1"/>
</dbReference>
<dbReference type="CDD" id="cd19944">
    <property type="entry name" value="NirB_Fer2_BFD-like_2"/>
    <property type="match status" value="1"/>
</dbReference>
<dbReference type="FunFam" id="3.30.413.10:FF:000007">
    <property type="entry name" value="Nitrite reductase [NAD(P)H] large subunit"/>
    <property type="match status" value="1"/>
</dbReference>
<dbReference type="FunFam" id="3.90.480.20:FF:000001">
    <property type="entry name" value="Nitrite reductase [NAD(P)H] large subunit"/>
    <property type="match status" value="1"/>
</dbReference>
<dbReference type="FunFam" id="3.50.50.60:FF:000033">
    <property type="entry name" value="Nitrite reductase [NAD(P)H], large subunit"/>
    <property type="match status" value="1"/>
</dbReference>
<dbReference type="FunFam" id="1.10.10.1100:FF:000002">
    <property type="entry name" value="Nitrite reductase large subunit"/>
    <property type="match status" value="1"/>
</dbReference>
<dbReference type="FunFam" id="3.30.390.30:FF:000006">
    <property type="entry name" value="Nitrite reductase large subunit"/>
    <property type="match status" value="1"/>
</dbReference>
<dbReference type="Gene3D" id="3.30.390.30">
    <property type="match status" value="1"/>
</dbReference>
<dbReference type="Gene3D" id="3.90.480.20">
    <property type="match status" value="1"/>
</dbReference>
<dbReference type="Gene3D" id="1.10.10.1100">
    <property type="entry name" value="BFD-like [2Fe-2S]-binding domain"/>
    <property type="match status" value="1"/>
</dbReference>
<dbReference type="Gene3D" id="3.50.50.60">
    <property type="entry name" value="FAD/NAD(P)-binding domain"/>
    <property type="match status" value="2"/>
</dbReference>
<dbReference type="Gene3D" id="3.30.413.10">
    <property type="entry name" value="Sulfite Reductase Hemoprotein, domain 1"/>
    <property type="match status" value="1"/>
</dbReference>
<dbReference type="InterPro" id="IPR007419">
    <property type="entry name" value="BFD-like_2Fe2S-bd_dom"/>
</dbReference>
<dbReference type="InterPro" id="IPR041854">
    <property type="entry name" value="BFD-like_2Fe2S-bd_dom_sf"/>
</dbReference>
<dbReference type="InterPro" id="IPR036188">
    <property type="entry name" value="FAD/NAD-bd_sf"/>
</dbReference>
<dbReference type="InterPro" id="IPR023753">
    <property type="entry name" value="FAD/NAD-binding_dom"/>
</dbReference>
<dbReference type="InterPro" id="IPR016156">
    <property type="entry name" value="FAD/NAD-linked_Rdtase_dimer_sf"/>
</dbReference>
<dbReference type="InterPro" id="IPR052034">
    <property type="entry name" value="NasD-like"/>
</dbReference>
<dbReference type="InterPro" id="IPR005117">
    <property type="entry name" value="NiRdtase/SiRdtase_haem-b_fer"/>
</dbReference>
<dbReference type="InterPro" id="IPR036136">
    <property type="entry name" value="Nit/Sulf_reduc_fer-like_dom_sf"/>
</dbReference>
<dbReference type="InterPro" id="IPR012744">
    <property type="entry name" value="Nitri_red_NirB"/>
</dbReference>
<dbReference type="InterPro" id="IPR017121">
    <property type="entry name" value="Nitrite_Rdtase_lsu"/>
</dbReference>
<dbReference type="InterPro" id="IPR006067">
    <property type="entry name" value="NO2/SO3_Rdtase_4Fe4S_dom"/>
</dbReference>
<dbReference type="InterPro" id="IPR045854">
    <property type="entry name" value="NO2/SO3_Rdtase_4Fe4S_sf"/>
</dbReference>
<dbReference type="InterPro" id="IPR006066">
    <property type="entry name" value="NO2/SO3_Rdtase_FeS/sirohaem_BS"/>
</dbReference>
<dbReference type="InterPro" id="IPR041575">
    <property type="entry name" value="Rubredoxin_C"/>
</dbReference>
<dbReference type="NCBIfam" id="TIGR02374">
    <property type="entry name" value="nitri_red_nirB"/>
    <property type="match status" value="1"/>
</dbReference>
<dbReference type="NCBIfam" id="NF011565">
    <property type="entry name" value="PRK14989.1"/>
    <property type="match status" value="1"/>
</dbReference>
<dbReference type="PANTHER" id="PTHR43809">
    <property type="entry name" value="NITRITE REDUCTASE (NADH) LARGE SUBUNIT"/>
    <property type="match status" value="1"/>
</dbReference>
<dbReference type="PANTHER" id="PTHR43809:SF1">
    <property type="entry name" value="NITRITE REDUCTASE (NADH) LARGE SUBUNIT"/>
    <property type="match status" value="1"/>
</dbReference>
<dbReference type="Pfam" id="PF04324">
    <property type="entry name" value="Fer2_BFD"/>
    <property type="match status" value="1"/>
</dbReference>
<dbReference type="Pfam" id="PF01077">
    <property type="entry name" value="NIR_SIR"/>
    <property type="match status" value="1"/>
</dbReference>
<dbReference type="Pfam" id="PF03460">
    <property type="entry name" value="NIR_SIR_ferr"/>
    <property type="match status" value="1"/>
</dbReference>
<dbReference type="Pfam" id="PF07992">
    <property type="entry name" value="Pyr_redox_2"/>
    <property type="match status" value="1"/>
</dbReference>
<dbReference type="Pfam" id="PF18267">
    <property type="entry name" value="Rubredoxin_C"/>
    <property type="match status" value="1"/>
</dbReference>
<dbReference type="PIRSF" id="PIRSF037149">
    <property type="entry name" value="NirB"/>
    <property type="match status" value="1"/>
</dbReference>
<dbReference type="PRINTS" id="PR00368">
    <property type="entry name" value="FADPNR"/>
</dbReference>
<dbReference type="PRINTS" id="PR00411">
    <property type="entry name" value="PNDRDTASEI"/>
</dbReference>
<dbReference type="PRINTS" id="PR00397">
    <property type="entry name" value="SIROHAEM"/>
</dbReference>
<dbReference type="SUPFAM" id="SSF51905">
    <property type="entry name" value="FAD/NAD(P)-binding domain"/>
    <property type="match status" value="2"/>
</dbReference>
<dbReference type="SUPFAM" id="SSF56014">
    <property type="entry name" value="Nitrite and sulphite reductase 4Fe-4S domain-like"/>
    <property type="match status" value="1"/>
</dbReference>
<dbReference type="SUPFAM" id="SSF55124">
    <property type="entry name" value="Nitrite/Sulfite reductase N-terminal domain-like"/>
    <property type="match status" value="1"/>
</dbReference>
<dbReference type="PROSITE" id="PS00365">
    <property type="entry name" value="NIR_SIR"/>
    <property type="match status" value="1"/>
</dbReference>
<sequence>MSKVRLAIIGNGMVGHRFIEDLLDKSDAANFDITVFCEEPRIAYDRVHLSSYFSHHTAEELSLVREGFYEKHGIKVLVGERAITINRQEKVIHSSAGRTVFYDKLIMATGSYPWIPPIKGSDTQDCFVYRTIEDLNAIESCARRSKRGAVVGGGLLGLEAAGALKNLGIETHVIEFAPMLMAEQLDQMGGEQLRRKIESMGVRVHTSKNTLEIVQEGVEARKTMRFADGSELEVDFIVFSTGIRPRDKLATQCGLDVAPRGGIVINDSCQTSDPDIYAIGECASWNNRVFGLVAPGYKMAQVAVDHILGSENAFEGADLSAKLKLLGVDVGGIGDAHGRTPGARSYVYLDESKEIYKRLIVSEDNKTLLGAVLVGDTSDYGNLLQLVLNAIELPENPDSLILPAHSGSGKPSIGVDKLPDSAQICSCFDVTKGDLIAAINKGCHTVAALKAETKAGTGCGGCIPLVTQVLNAELAKQGIEVNNNLCEHFAYSRQELFHLIRVEGIKTFEELLAKHGKGYGCEVCKPTVGSLLASCWNEYILKPEHTPLQDSNDNFLANIQKDGTYSVIPRSPGGEITPEGLMAVGRIAREFNLYTKITGSQRLAMFGAQKDDLPEIWRQLIEAGFETGHAYAKALRMAKTCVGSTWCRYGVGDSVGLGVELENRYKGIRTPHKMKFGVSGCTRECSEAQGKDVGIIATEKGWNLYVCGNGGMKPRHADLLAADIDRETLIKYLDRFMMFYIRTADKLTRTAPWLENLEGGIDYLKAVIIDDKLGLNAHLEEEMARLREAVLCEWTETVNTPSAQTRFKHFINSDKRDPNVQMVPEREQHRPATPYERIPVTLVEDNA</sequence>
<accession>P08201</accession>
<accession>Q2M731</accession>
<proteinExistence type="inferred from homology"/>
<keyword id="KW-0001">2Fe-2S</keyword>
<keyword id="KW-0004">4Fe-4S</keyword>
<keyword id="KW-0274">FAD</keyword>
<keyword id="KW-0285">Flavoprotein</keyword>
<keyword id="KW-0349">Heme</keyword>
<keyword id="KW-0408">Iron</keyword>
<keyword id="KW-0411">Iron-sulfur</keyword>
<keyword id="KW-0479">Metal-binding</keyword>
<keyword id="KW-0520">NAD</keyword>
<keyword id="KW-0534">Nitrate assimilation</keyword>
<keyword id="KW-0560">Oxidoreductase</keyword>
<keyword id="KW-1185">Reference proteome</keyword>
<name>NIRB_ECOLI</name>